<gene>
    <name type="primary">AFAP1L1</name>
</gene>
<organism>
    <name type="scientific">Homo sapiens</name>
    <name type="common">Human</name>
    <dbReference type="NCBI Taxonomy" id="9606"/>
    <lineage>
        <taxon>Eukaryota</taxon>
        <taxon>Metazoa</taxon>
        <taxon>Chordata</taxon>
        <taxon>Craniata</taxon>
        <taxon>Vertebrata</taxon>
        <taxon>Euteleostomi</taxon>
        <taxon>Mammalia</taxon>
        <taxon>Eutheria</taxon>
        <taxon>Euarchontoglires</taxon>
        <taxon>Primates</taxon>
        <taxon>Haplorrhini</taxon>
        <taxon>Catarrhini</taxon>
        <taxon>Hominidae</taxon>
        <taxon>Homo</taxon>
    </lineage>
</organism>
<dbReference type="EMBL" id="AK074185">
    <property type="protein sequence ID" value="BAB85011.1"/>
    <property type="status" value="ALT_INIT"/>
    <property type="molecule type" value="mRNA"/>
</dbReference>
<dbReference type="EMBL" id="AK094067">
    <property type="protein sequence ID" value="BAC04277.1"/>
    <property type="molecule type" value="mRNA"/>
</dbReference>
<dbReference type="EMBL" id="AK095980">
    <property type="protein sequence ID" value="BAC04664.1"/>
    <property type="molecule type" value="mRNA"/>
</dbReference>
<dbReference type="EMBL" id="BC040723">
    <property type="protein sequence ID" value="AAH40723.1"/>
    <property type="molecule type" value="mRNA"/>
</dbReference>
<dbReference type="EMBL" id="BC125093">
    <property type="protein sequence ID" value="AAI25094.1"/>
    <property type="molecule type" value="mRNA"/>
</dbReference>
<dbReference type="EMBL" id="BC125094">
    <property type="protein sequence ID" value="AAI25095.1"/>
    <property type="molecule type" value="mRNA"/>
</dbReference>
<dbReference type="CCDS" id="CCDS34274.1">
    <molecule id="Q8TED9-1"/>
</dbReference>
<dbReference type="CCDS" id="CCDS54932.1">
    <molecule id="Q8TED9-2"/>
</dbReference>
<dbReference type="RefSeq" id="NP_001139809.1">
    <molecule id="Q8TED9-2"/>
    <property type="nucleotide sequence ID" value="NM_001146337.3"/>
</dbReference>
<dbReference type="RefSeq" id="NP_001309991.1">
    <property type="nucleotide sequence ID" value="NM_001323062.1"/>
</dbReference>
<dbReference type="RefSeq" id="NP_001309992.1">
    <molecule id="Q8TED9-3"/>
    <property type="nucleotide sequence ID" value="NM_001323063.2"/>
</dbReference>
<dbReference type="RefSeq" id="NP_689619.1">
    <molecule id="Q8TED9-1"/>
    <property type="nucleotide sequence ID" value="NM_152406.4"/>
</dbReference>
<dbReference type="SMR" id="Q8TED9"/>
<dbReference type="BioGRID" id="126390">
    <property type="interactions" value="20"/>
</dbReference>
<dbReference type="FunCoup" id="Q8TED9">
    <property type="interactions" value="631"/>
</dbReference>
<dbReference type="IntAct" id="Q8TED9">
    <property type="interactions" value="16"/>
</dbReference>
<dbReference type="STRING" id="9606.ENSP00000296721"/>
<dbReference type="GlyGen" id="Q8TED9">
    <property type="glycosylation" value="1 site"/>
</dbReference>
<dbReference type="iPTMnet" id="Q8TED9"/>
<dbReference type="PhosphoSitePlus" id="Q8TED9"/>
<dbReference type="BioMuta" id="AFAP1L1"/>
<dbReference type="DMDM" id="156630522"/>
<dbReference type="jPOST" id="Q8TED9"/>
<dbReference type="MassIVE" id="Q8TED9"/>
<dbReference type="PaxDb" id="9606-ENSP00000296721"/>
<dbReference type="PeptideAtlas" id="Q8TED9"/>
<dbReference type="ProteomicsDB" id="74452">
    <molecule id="Q8TED9-1"/>
</dbReference>
<dbReference type="ProteomicsDB" id="74453">
    <molecule id="Q8TED9-2"/>
</dbReference>
<dbReference type="ProteomicsDB" id="74454">
    <molecule id="Q8TED9-3"/>
</dbReference>
<dbReference type="ProteomicsDB" id="74455">
    <molecule id="Q8TED9-4"/>
</dbReference>
<dbReference type="Antibodypedia" id="2023">
    <property type="antibodies" value="74 antibodies from 21 providers"/>
</dbReference>
<dbReference type="DNASU" id="134265"/>
<dbReference type="Ensembl" id="ENST00000296721.9">
    <molecule id="Q8TED9-1"/>
    <property type="protein sequence ID" value="ENSP00000296721.4"/>
    <property type="gene ID" value="ENSG00000157510.14"/>
</dbReference>
<dbReference type="Ensembl" id="ENST00000515000.1">
    <molecule id="Q8TED9-2"/>
    <property type="protein sequence ID" value="ENSP00000424427.1"/>
    <property type="gene ID" value="ENSG00000157510.14"/>
</dbReference>
<dbReference type="GeneID" id="134265"/>
<dbReference type="KEGG" id="hsa:134265"/>
<dbReference type="MANE-Select" id="ENST00000296721.9">
    <property type="protein sequence ID" value="ENSP00000296721.4"/>
    <property type="RefSeq nucleotide sequence ID" value="NM_152406.4"/>
    <property type="RefSeq protein sequence ID" value="NP_689619.1"/>
</dbReference>
<dbReference type="UCSC" id="uc003lqh.4">
    <molecule id="Q8TED9-1"/>
    <property type="organism name" value="human"/>
</dbReference>
<dbReference type="AGR" id="HGNC:26714"/>
<dbReference type="CTD" id="134265"/>
<dbReference type="DisGeNET" id="134265"/>
<dbReference type="GeneCards" id="AFAP1L1"/>
<dbReference type="HGNC" id="HGNC:26714">
    <property type="gene designation" value="AFAP1L1"/>
</dbReference>
<dbReference type="HPA" id="ENSG00000157510">
    <property type="expression patterns" value="Tissue enhanced (skeletal)"/>
</dbReference>
<dbReference type="MIM" id="614410">
    <property type="type" value="gene"/>
</dbReference>
<dbReference type="neXtProt" id="NX_Q8TED9"/>
<dbReference type="OpenTargets" id="ENSG00000157510"/>
<dbReference type="PharmGKB" id="PA162375772"/>
<dbReference type="VEuPathDB" id="HostDB:ENSG00000157510"/>
<dbReference type="eggNOG" id="ENOG502R3HG">
    <property type="taxonomic scope" value="Eukaryota"/>
</dbReference>
<dbReference type="GeneTree" id="ENSGT00950000183067"/>
<dbReference type="HOGENOM" id="CLU_014418_1_0_1"/>
<dbReference type="InParanoid" id="Q8TED9"/>
<dbReference type="OMA" id="HSCEVVP"/>
<dbReference type="OrthoDB" id="9937741at2759"/>
<dbReference type="PAN-GO" id="Q8TED9">
    <property type="GO annotations" value="2 GO annotations based on evolutionary models"/>
</dbReference>
<dbReference type="PhylomeDB" id="Q8TED9"/>
<dbReference type="TreeFam" id="TF332622"/>
<dbReference type="PathwayCommons" id="Q8TED9"/>
<dbReference type="SignaLink" id="Q8TED9"/>
<dbReference type="BioGRID-ORCS" id="134265">
    <property type="hits" value="7 hits in 1142 CRISPR screens"/>
</dbReference>
<dbReference type="ChiTaRS" id="AFAP1L1">
    <property type="organism name" value="human"/>
</dbReference>
<dbReference type="GenomeRNAi" id="134265"/>
<dbReference type="Pharos" id="Q8TED9">
    <property type="development level" value="Tbio"/>
</dbReference>
<dbReference type="PRO" id="PR:Q8TED9"/>
<dbReference type="Proteomes" id="UP000005640">
    <property type="component" value="Chromosome 5"/>
</dbReference>
<dbReference type="RNAct" id="Q8TED9">
    <property type="molecule type" value="protein"/>
</dbReference>
<dbReference type="Bgee" id="ENSG00000157510">
    <property type="expression patterns" value="Expressed in apex of heart and 134 other cell types or tissues"/>
</dbReference>
<dbReference type="GO" id="GO:0070161">
    <property type="term" value="C:anchoring junction"/>
    <property type="evidence" value="ECO:0007669"/>
    <property type="project" value="UniProtKB-KW"/>
</dbReference>
<dbReference type="GO" id="GO:0042995">
    <property type="term" value="C:cell projection"/>
    <property type="evidence" value="ECO:0007669"/>
    <property type="project" value="UniProtKB-SubCell"/>
</dbReference>
<dbReference type="GO" id="GO:0005829">
    <property type="term" value="C:cytosol"/>
    <property type="evidence" value="ECO:0000318"/>
    <property type="project" value="GO_Central"/>
</dbReference>
<dbReference type="GO" id="GO:0002102">
    <property type="term" value="C:podosome"/>
    <property type="evidence" value="ECO:0007669"/>
    <property type="project" value="UniProtKB-SubCell"/>
</dbReference>
<dbReference type="GO" id="GO:0001725">
    <property type="term" value="C:stress fiber"/>
    <property type="evidence" value="ECO:0007669"/>
    <property type="project" value="UniProtKB-SubCell"/>
</dbReference>
<dbReference type="CDD" id="cd13306">
    <property type="entry name" value="PH1_AFAP"/>
    <property type="match status" value="1"/>
</dbReference>
<dbReference type="CDD" id="cd13307">
    <property type="entry name" value="PH2_AFAP"/>
    <property type="match status" value="1"/>
</dbReference>
<dbReference type="FunFam" id="2.30.29.30:FF:000189">
    <property type="entry name" value="Actin filament associated protein 1-like 1"/>
    <property type="match status" value="1"/>
</dbReference>
<dbReference type="FunFam" id="2.30.29.30:FF:000020">
    <property type="entry name" value="Actin filament-associated protein 1-like 2 isoform 1"/>
    <property type="match status" value="1"/>
</dbReference>
<dbReference type="Gene3D" id="2.30.29.30">
    <property type="entry name" value="Pleckstrin-homology domain (PH domain)/Phosphotyrosine-binding domain (PTB)"/>
    <property type="match status" value="2"/>
</dbReference>
<dbReference type="InterPro" id="IPR030113">
    <property type="entry name" value="AFAP"/>
</dbReference>
<dbReference type="InterPro" id="IPR011993">
    <property type="entry name" value="PH-like_dom_sf"/>
</dbReference>
<dbReference type="InterPro" id="IPR001849">
    <property type="entry name" value="PH_domain"/>
</dbReference>
<dbReference type="PANTHER" id="PTHR14338">
    <property type="entry name" value="ACTIN FILAMENT-ASSOCIATED PROTEIN 1 FAMILY MEMBER"/>
    <property type="match status" value="1"/>
</dbReference>
<dbReference type="PANTHER" id="PTHR14338:SF1">
    <property type="entry name" value="ACTIN FILAMENT-ASSOCIATED PROTEIN 1-LIKE 1"/>
    <property type="match status" value="1"/>
</dbReference>
<dbReference type="Pfam" id="PF00169">
    <property type="entry name" value="PH"/>
    <property type="match status" value="2"/>
</dbReference>
<dbReference type="SMART" id="SM00233">
    <property type="entry name" value="PH"/>
    <property type="match status" value="2"/>
</dbReference>
<dbReference type="SUPFAM" id="SSF50729">
    <property type="entry name" value="PH domain-like"/>
    <property type="match status" value="2"/>
</dbReference>
<dbReference type="PROSITE" id="PS50003">
    <property type="entry name" value="PH_DOMAIN"/>
    <property type="match status" value="2"/>
</dbReference>
<reference key="1">
    <citation type="journal article" date="2003" name="DNA Res.">
        <title>Characterization of long cDNA clones from human adult spleen. II. The complete sequences of 81 cDNA clones.</title>
        <authorList>
            <person name="Jikuya H."/>
            <person name="Takano J."/>
            <person name="Kikuno R."/>
            <person name="Hirosawa M."/>
            <person name="Nagase T."/>
            <person name="Nomura N."/>
            <person name="Ohara O."/>
        </authorList>
    </citation>
    <scope>NUCLEOTIDE SEQUENCE [LARGE SCALE MRNA] (ISOFORM 1)</scope>
    <source>
        <tissue>Spleen</tissue>
    </source>
</reference>
<reference key="2">
    <citation type="journal article" date="2004" name="Nat. Genet.">
        <title>Complete sequencing and characterization of 21,243 full-length human cDNAs.</title>
        <authorList>
            <person name="Ota T."/>
            <person name="Suzuki Y."/>
            <person name="Nishikawa T."/>
            <person name="Otsuki T."/>
            <person name="Sugiyama T."/>
            <person name="Irie R."/>
            <person name="Wakamatsu A."/>
            <person name="Hayashi K."/>
            <person name="Sato H."/>
            <person name="Nagai K."/>
            <person name="Kimura K."/>
            <person name="Makita H."/>
            <person name="Sekine M."/>
            <person name="Obayashi M."/>
            <person name="Nishi T."/>
            <person name="Shibahara T."/>
            <person name="Tanaka T."/>
            <person name="Ishii S."/>
            <person name="Yamamoto J."/>
            <person name="Saito K."/>
            <person name="Kawai Y."/>
            <person name="Isono Y."/>
            <person name="Nakamura Y."/>
            <person name="Nagahari K."/>
            <person name="Murakami K."/>
            <person name="Yasuda T."/>
            <person name="Iwayanagi T."/>
            <person name="Wagatsuma M."/>
            <person name="Shiratori A."/>
            <person name="Sudo H."/>
            <person name="Hosoiri T."/>
            <person name="Kaku Y."/>
            <person name="Kodaira H."/>
            <person name="Kondo H."/>
            <person name="Sugawara M."/>
            <person name="Takahashi M."/>
            <person name="Kanda K."/>
            <person name="Yokoi T."/>
            <person name="Furuya T."/>
            <person name="Kikkawa E."/>
            <person name="Omura Y."/>
            <person name="Abe K."/>
            <person name="Kamihara K."/>
            <person name="Katsuta N."/>
            <person name="Sato K."/>
            <person name="Tanikawa M."/>
            <person name="Yamazaki M."/>
            <person name="Ninomiya K."/>
            <person name="Ishibashi T."/>
            <person name="Yamashita H."/>
            <person name="Murakawa K."/>
            <person name="Fujimori K."/>
            <person name="Tanai H."/>
            <person name="Kimata M."/>
            <person name="Watanabe M."/>
            <person name="Hiraoka S."/>
            <person name="Chiba Y."/>
            <person name="Ishida S."/>
            <person name="Ono Y."/>
            <person name="Takiguchi S."/>
            <person name="Watanabe S."/>
            <person name="Yosida M."/>
            <person name="Hotuta T."/>
            <person name="Kusano J."/>
            <person name="Kanehori K."/>
            <person name="Takahashi-Fujii A."/>
            <person name="Hara H."/>
            <person name="Tanase T.-O."/>
            <person name="Nomura Y."/>
            <person name="Togiya S."/>
            <person name="Komai F."/>
            <person name="Hara R."/>
            <person name="Takeuchi K."/>
            <person name="Arita M."/>
            <person name="Imose N."/>
            <person name="Musashino K."/>
            <person name="Yuuki H."/>
            <person name="Oshima A."/>
            <person name="Sasaki N."/>
            <person name="Aotsuka S."/>
            <person name="Yoshikawa Y."/>
            <person name="Matsunawa H."/>
            <person name="Ichihara T."/>
            <person name="Shiohata N."/>
            <person name="Sano S."/>
            <person name="Moriya S."/>
            <person name="Momiyama H."/>
            <person name="Satoh N."/>
            <person name="Takami S."/>
            <person name="Terashima Y."/>
            <person name="Suzuki O."/>
            <person name="Nakagawa S."/>
            <person name="Senoh A."/>
            <person name="Mizoguchi H."/>
            <person name="Goto Y."/>
            <person name="Shimizu F."/>
            <person name="Wakebe H."/>
            <person name="Hishigaki H."/>
            <person name="Watanabe T."/>
            <person name="Sugiyama A."/>
            <person name="Takemoto M."/>
            <person name="Kawakami B."/>
            <person name="Yamazaki M."/>
            <person name="Watanabe K."/>
            <person name="Kumagai A."/>
            <person name="Itakura S."/>
            <person name="Fukuzumi Y."/>
            <person name="Fujimori Y."/>
            <person name="Komiyama M."/>
            <person name="Tashiro H."/>
            <person name="Tanigami A."/>
            <person name="Fujiwara T."/>
            <person name="Ono T."/>
            <person name="Yamada K."/>
            <person name="Fujii Y."/>
            <person name="Ozaki K."/>
            <person name="Hirao M."/>
            <person name="Ohmori Y."/>
            <person name="Kawabata A."/>
            <person name="Hikiji T."/>
            <person name="Kobatake N."/>
            <person name="Inagaki H."/>
            <person name="Ikema Y."/>
            <person name="Okamoto S."/>
            <person name="Okitani R."/>
            <person name="Kawakami T."/>
            <person name="Noguchi S."/>
            <person name="Itoh T."/>
            <person name="Shigeta K."/>
            <person name="Senba T."/>
            <person name="Matsumura K."/>
            <person name="Nakajima Y."/>
            <person name="Mizuno T."/>
            <person name="Morinaga M."/>
            <person name="Sasaki M."/>
            <person name="Togashi T."/>
            <person name="Oyama M."/>
            <person name="Hata H."/>
            <person name="Watanabe M."/>
            <person name="Komatsu T."/>
            <person name="Mizushima-Sugano J."/>
            <person name="Satoh T."/>
            <person name="Shirai Y."/>
            <person name="Takahashi Y."/>
            <person name="Nakagawa K."/>
            <person name="Okumura K."/>
            <person name="Nagase T."/>
            <person name="Nomura N."/>
            <person name="Kikuchi H."/>
            <person name="Masuho Y."/>
            <person name="Yamashita R."/>
            <person name="Nakai K."/>
            <person name="Yada T."/>
            <person name="Nakamura Y."/>
            <person name="Ohara O."/>
            <person name="Isogai T."/>
            <person name="Sugano S."/>
        </authorList>
    </citation>
    <scope>NUCLEOTIDE SEQUENCE [LARGE SCALE MRNA] (ISOFORM 4)</scope>
    <source>
        <tissue>Lung</tissue>
        <tissue>Uterus</tissue>
    </source>
</reference>
<reference key="3">
    <citation type="journal article" date="2004" name="Genome Res.">
        <title>The status, quality, and expansion of the NIH full-length cDNA project: the Mammalian Gene Collection (MGC).</title>
        <authorList>
            <consortium name="The MGC Project Team"/>
        </authorList>
    </citation>
    <scope>NUCLEOTIDE SEQUENCE [LARGE SCALE MRNA] (ISOFORMS 1; 2 AND 3)</scope>
    <source>
        <tissue>Skin</tissue>
    </source>
</reference>
<reference key="4">
    <citation type="journal article" date="2011" name="Eur. J. Cell Biol.">
        <title>AFAP1L1 is a novel adaptor protein of the AFAP family that interacts with cortactin and localizes to invadosomes.</title>
        <authorList>
            <person name="Snyder B.N."/>
            <person name="Cho Y."/>
            <person name="Qian Y."/>
            <person name="Coad J.E."/>
            <person name="Flynn D.C."/>
            <person name="Cunnick J.M."/>
        </authorList>
    </citation>
    <scope>FUNCTION</scope>
    <scope>INTERACTION WITH CTTN</scope>
    <scope>SUBCELLULAR LOCATION</scope>
    <scope>TISSUE SPECIFICITY</scope>
</reference>
<sequence length="768" mass="86432">MDRGQVLEQLLPELTGLLSLLDHEYLSDTTLEKKMAVASILQSLQPLPAKEVSYLYVNTADLHSGPSFVESLFEEFDCDLSDLRDMPEDDGEPSKGASPELAKSPRLRNAADLPPPLPNKPPPEDYYEEALPLGPGKSPEYISSHNGCSPSHSIVDGYYEDADSSYPATRVNGELKSSYNDSDAMSSSYESYDEEEEEGKSPQPRHQWPSEEASMHLVRECRICAFLLRKKRFGQWAKQLTVIREDQLLCYKSSKDRQPHLRLALDTCSIIYVPKDSRHKRHELRFTQGATEVLVLALQSREQAEEWLKVIREVSKPVGGAEGVEVPRSPVLLCKLDLDKRLSQEKQTSDSDSVGVGDNCSTLGRRETCDHGKGKKSSLAELKGSMSRAAGRKITRIIGFSKKKTLADDLQTSSTEEEVPCCGYLNVLVNQGWKERWCRLKCNTLYFHKDHMDLRTHVNAIALQGCEVAPGFGPRHPFAFRILRNRQEVAILEASCSEDMGRWLGLLLVEMGSRVTPEALHYDYVDVETLTSIVSAGRNSFLYARSCQNQWPEPRVYDDVPYEKMQDEEPERPTGAQVKRHASSCSEKSHRVDPQVKVKRHASSANQYKYGKNRAEEDARRYLVEKEKLEKEKETIRTELIALRQEKRELKEAIRSSPGAKLKALEEAVATLEAQCRAKEERRIDLELKLVAVKERLQQSLAGGPALGLSVSSKPKSGETANKPQNSVPEQPLPVNCVSELRKRSPSIVASNQGRVLQKAKEWEMKKT</sequence>
<comment type="function">
    <text evidence="6">May be involved in podosome and invadosome formation.</text>
</comment>
<comment type="subunit">
    <text evidence="6">Interacts with CTTN.</text>
</comment>
<comment type="interaction">
    <interactant intactId="EBI-1053644">
        <id>Q8TED9</id>
    </interactant>
    <interactant intactId="EBI-448202">
        <id>O95257</id>
        <label>GADD45G</label>
    </interactant>
    <organismsDiffer>false</organismsDiffer>
    <experiments>8</experiments>
</comment>
<comment type="subcellular location">
    <subcellularLocation>
        <location evidence="6">Cytoplasm</location>
    </subcellularLocation>
    <subcellularLocation>
        <location evidence="6">Cell projection</location>
        <location evidence="6">Podosome</location>
    </subcellularLocation>
    <subcellularLocation>
        <location evidence="6">Cell projection</location>
        <location evidence="6">Invadopodium</location>
    </subcellularLocation>
    <subcellularLocation>
        <location evidence="6">Cytoplasm</location>
        <location evidence="6">Cytoskeleton</location>
        <location evidence="6">Stress fiber</location>
    </subcellularLocation>
</comment>
<comment type="alternative products">
    <event type="alternative splicing"/>
    <isoform>
        <id>Q8TED9-1</id>
        <name>1</name>
        <sequence type="displayed"/>
    </isoform>
    <isoform>
        <id>Q8TED9-2</id>
        <name>2</name>
        <sequence type="described" ref="VSP_026859"/>
    </isoform>
    <isoform>
        <id>Q8TED9-3</id>
        <name>3</name>
        <sequence type="described" ref="VSP_026857 VSP_026858"/>
    </isoform>
    <isoform>
        <id>Q8TED9-4</id>
        <name>4</name>
        <sequence type="described" ref="VSP_026856"/>
    </isoform>
</comment>
<comment type="tissue specificity">
    <text evidence="6">Expressed in breast, colon and brain. In all 3 tissues, expressed in the microvasculature (at protein level). In addition, in the breast, found in the contractile myoepithelial cell layer which surrounds the breast ducts (at protein level). In the colon, expressed in the mucous membrane and colonic crypts and in the smooth muscle cell layer which provide movement of the colon (at protein level). In the cerebellum, localized around the Purkinje neurons and the granule cells of the granular layer, but not inside cell bodies (at protein level). Outside of the cerebellar cortex, expressed in glial cells (at protein level). Highly expressed away from the cell bodies within the dentate nucleus (at protein level).</text>
</comment>
<comment type="sequence caution" evidence="9">
    <conflict type="erroneous initiation">
        <sequence resource="EMBL-CDS" id="BAB85011"/>
    </conflict>
    <text>Extended N-terminus.</text>
</comment>
<evidence type="ECO:0000250" key="1">
    <source>
        <dbReference type="UniProtKB" id="D4AB98"/>
    </source>
</evidence>
<evidence type="ECO:0000250" key="2">
    <source>
        <dbReference type="UniProtKB" id="Q8BZI0"/>
    </source>
</evidence>
<evidence type="ECO:0000255" key="3"/>
<evidence type="ECO:0000255" key="4">
    <source>
        <dbReference type="PROSITE-ProRule" id="PRU00145"/>
    </source>
</evidence>
<evidence type="ECO:0000256" key="5">
    <source>
        <dbReference type="SAM" id="MobiDB-lite"/>
    </source>
</evidence>
<evidence type="ECO:0000269" key="6">
    <source>
    </source>
</evidence>
<evidence type="ECO:0000303" key="7">
    <source>
    </source>
</evidence>
<evidence type="ECO:0000303" key="8">
    <source>
    </source>
</evidence>
<evidence type="ECO:0000305" key="9"/>
<proteinExistence type="evidence at protein level"/>
<feature type="chain" id="PRO_0000295239" description="Actin filament-associated protein 1-like 1">
    <location>
        <begin position="1"/>
        <end position="768"/>
    </location>
</feature>
<feature type="domain" description="PH 1" evidence="4">
    <location>
        <begin position="220"/>
        <end position="316"/>
    </location>
</feature>
<feature type="domain" description="PH 2" evidence="4">
    <location>
        <begin position="418"/>
        <end position="512"/>
    </location>
</feature>
<feature type="region of interest" description="Disordered" evidence="5">
    <location>
        <begin position="82"/>
        <end position="145"/>
    </location>
</feature>
<feature type="region of interest" description="Disordered" evidence="5">
    <location>
        <begin position="173"/>
        <end position="211"/>
    </location>
</feature>
<feature type="region of interest" description="Disordered" evidence="5">
    <location>
        <begin position="566"/>
        <end position="604"/>
    </location>
</feature>
<feature type="region of interest" description="Disordered" evidence="5">
    <location>
        <begin position="705"/>
        <end position="768"/>
    </location>
</feature>
<feature type="coiled-coil region" evidence="3">
    <location>
        <begin position="611"/>
        <end position="700"/>
    </location>
</feature>
<feature type="compositionally biased region" description="Low complexity" evidence="5">
    <location>
        <begin position="177"/>
        <end position="190"/>
    </location>
</feature>
<feature type="compositionally biased region" description="Basic and acidic residues" evidence="5">
    <location>
        <begin position="587"/>
        <end position="596"/>
    </location>
</feature>
<feature type="compositionally biased region" description="Polar residues" evidence="5">
    <location>
        <begin position="710"/>
        <end position="729"/>
    </location>
</feature>
<feature type="compositionally biased region" description="Basic and acidic residues" evidence="5">
    <location>
        <begin position="759"/>
        <end position="768"/>
    </location>
</feature>
<feature type="modified residue" description="Phosphoserine" evidence="1">
    <location>
        <position position="94"/>
    </location>
</feature>
<feature type="modified residue" description="Phosphoserine" evidence="1">
    <location>
        <position position="98"/>
    </location>
</feature>
<feature type="modified residue" description="Phosphoserine" evidence="1">
    <location>
        <position position="104"/>
    </location>
</feature>
<feature type="modified residue" description="Phosphoserine" evidence="2">
    <location>
        <position position="153"/>
    </location>
</feature>
<feature type="modified residue" description="Phosphoserine" evidence="2">
    <location>
        <position position="329"/>
    </location>
</feature>
<feature type="modified residue" description="Phosphoserine" evidence="2">
    <location>
        <position position="343"/>
    </location>
</feature>
<feature type="modified residue" description="Phosphotyrosine" evidence="2">
    <location>
        <position position="557"/>
    </location>
</feature>
<feature type="modified residue" description="Phosphoserine" evidence="2">
    <location>
        <position position="747"/>
    </location>
</feature>
<feature type="splice variant" id="VSP_026856" description="In isoform 4." evidence="7">
    <location>
        <begin position="1"/>
        <end position="385"/>
    </location>
</feature>
<feature type="splice variant" id="VSP_026857" description="In isoform 3." evidence="8">
    <original>RLSQEKQTSDSDSVGVGDNCSTLGRRETCDHGKGKKS</original>
    <variation>VYLSPLSLPQARQWPLNTGSTPGELTGWGESQATAKL</variation>
    <location>
        <begin position="341"/>
        <end position="377"/>
    </location>
</feature>
<feature type="splice variant" id="VSP_026858" description="In isoform 3." evidence="8">
    <location>
        <begin position="378"/>
        <end position="768"/>
    </location>
</feature>
<feature type="splice variant" id="VSP_026859" description="In isoform 2." evidence="8">
    <location>
        <begin position="719"/>
        <end position="761"/>
    </location>
</feature>
<feature type="sequence conflict" description="In Ref. 2; BAC04664." evidence="9" ref="2">
    <original>R</original>
    <variation>Q</variation>
    <location>
        <position position="84"/>
    </location>
</feature>
<feature type="sequence conflict" description="In Ref. 2; BAC04664." evidence="9" ref="2">
    <original>R</original>
    <variation>C</variation>
    <location>
        <position position="106"/>
    </location>
</feature>
<feature type="sequence conflict" description="In Ref. 2; BAC04664." evidence="9" ref="2">
    <original>E</original>
    <variation>G</variation>
    <location>
        <position position="325"/>
    </location>
</feature>
<protein>
    <recommendedName>
        <fullName>Actin filament-associated protein 1-like 1</fullName>
        <shortName>AFAP1-like protein 1</shortName>
    </recommendedName>
</protein>
<accession>Q8TED9</accession>
<accession>Q08AN4</accession>
<accession>Q08AN5</accession>
<accession>Q8IW82</accession>
<accession>Q8N8Z5</accession>
<accession>Q8N9Q4</accession>
<keyword id="KW-0025">Alternative splicing</keyword>
<keyword id="KW-0965">Cell junction</keyword>
<keyword id="KW-0966">Cell projection</keyword>
<keyword id="KW-0175">Coiled coil</keyword>
<keyword id="KW-0963">Cytoplasm</keyword>
<keyword id="KW-0206">Cytoskeleton</keyword>
<keyword id="KW-0597">Phosphoprotein</keyword>
<keyword id="KW-1267">Proteomics identification</keyword>
<keyword id="KW-1185">Reference proteome</keyword>
<keyword id="KW-0677">Repeat</keyword>
<name>AF1L1_HUMAN</name>